<keyword id="KW-0002">3D-structure</keyword>
<keyword id="KW-0058">Aromatic hydrocarbons catabolism</keyword>
<keyword id="KW-0223">Dioxygenase</keyword>
<keyword id="KW-0903">Direct protein sequencing</keyword>
<keyword id="KW-0408">Iron</keyword>
<keyword id="KW-0560">Oxidoreductase</keyword>
<gene>
    <name type="primary">ligA</name>
</gene>
<name>PCYA_SPHSK</name>
<protein>
    <recommendedName>
        <fullName>Protocatechuate 4,5-dioxygenase alpha chain</fullName>
        <ecNumber>1.13.11.8</ecNumber>
    </recommendedName>
    <alternativeName>
        <fullName>4,5-PCD</fullName>
    </alternativeName>
</protein>
<accession>P22635</accession>
<organism>
    <name type="scientific">Sphingobium sp. (strain NBRC 103272 / SYK-6)</name>
    <dbReference type="NCBI Taxonomy" id="627192"/>
    <lineage>
        <taxon>Bacteria</taxon>
        <taxon>Pseudomonadati</taxon>
        <taxon>Pseudomonadota</taxon>
        <taxon>Alphaproteobacteria</taxon>
        <taxon>Sphingomonadales</taxon>
        <taxon>Sphingomonadaceae</taxon>
        <taxon>Sphingobium</taxon>
    </lineage>
</organism>
<comment type="function">
    <text>Responsible for the aromatic ring fission of protocatechuate.</text>
</comment>
<comment type="catalytic activity">
    <reaction>
        <text>3,4-dihydroxybenzoate + O2 = 4-carboxy-2-hydroxy-cis,cis-muconate 6-semialdehyde + H(+)</text>
        <dbReference type="Rhea" id="RHEA:24044"/>
        <dbReference type="ChEBI" id="CHEBI:15378"/>
        <dbReference type="ChEBI" id="CHEBI:15379"/>
        <dbReference type="ChEBI" id="CHEBI:36241"/>
        <dbReference type="ChEBI" id="CHEBI:58358"/>
        <dbReference type="EC" id="1.13.11.8"/>
    </reaction>
</comment>
<comment type="cofactor">
    <cofactor>
        <name>Fe(2+)</name>
        <dbReference type="ChEBI" id="CHEBI:29033"/>
    </cofactor>
</comment>
<comment type="subunit">
    <text>Composed of two subunits (alpha and beta) in a 1:1 ratio.</text>
</comment>
<reference key="1">
    <citation type="journal article" date="1990" name="J. Bacteriol.">
        <title>Molecular cloning of the protocatechuate 4,5-dioxygenase genes of Pseudomonas paucimobilis.</title>
        <authorList>
            <person name="Noda Y."/>
            <person name="Nishikawa S."/>
            <person name="Shiozuka K."/>
            <person name="Kadokura H."/>
            <person name="Nakajima H."/>
            <person name="Yoda K."/>
            <person name="Katayama Y."/>
            <person name="Morohoshi N."/>
            <person name="Haraguchi T."/>
            <person name="Yamasaki M."/>
        </authorList>
    </citation>
    <scope>NUCLEOTIDE SEQUENCE [GENOMIC DNA]</scope>
    <scope>PROTEIN SEQUENCE OF 23-34</scope>
    <source>
        <strain>NBRC 103272 / SYK-6</strain>
    </source>
</reference>
<dbReference type="EC" id="1.13.11.8"/>
<dbReference type="EMBL" id="M34835">
    <property type="protein sequence ID" value="AAA17727.1"/>
    <property type="molecule type" value="Unassigned_DNA"/>
</dbReference>
<dbReference type="PIR" id="A35271">
    <property type="entry name" value="A35271"/>
</dbReference>
<dbReference type="RefSeq" id="WP_014075577.1">
    <property type="nucleotide sequence ID" value="NC_015976.1"/>
</dbReference>
<dbReference type="PDB" id="1B4U">
    <property type="method" value="X-ray"/>
    <property type="resolution" value="2.20 A"/>
    <property type="chains" value="A/C=1-139"/>
</dbReference>
<dbReference type="PDB" id="1BOU">
    <property type="method" value="X-ray"/>
    <property type="resolution" value="2.20 A"/>
    <property type="chains" value="A/C=1-139"/>
</dbReference>
<dbReference type="PDBsum" id="1B4U"/>
<dbReference type="PDBsum" id="1BOU"/>
<dbReference type="SMR" id="P22635"/>
<dbReference type="IntAct" id="P22635">
    <property type="interactions" value="1"/>
</dbReference>
<dbReference type="STRING" id="627192.SLG_12510"/>
<dbReference type="KEGG" id="ag:AAA17727"/>
<dbReference type="OrthoDB" id="7864521at2"/>
<dbReference type="BioCyc" id="MetaCyc:MONOMER-15116"/>
<dbReference type="EvolutionaryTrace" id="P22635"/>
<dbReference type="GO" id="GO:0018579">
    <property type="term" value="F:protocatechuate 4,5-dioxygenase activity"/>
    <property type="evidence" value="ECO:0007669"/>
    <property type="project" value="UniProtKB-EC"/>
</dbReference>
<dbReference type="GO" id="GO:0009056">
    <property type="term" value="P:catabolic process"/>
    <property type="evidence" value="ECO:0007669"/>
    <property type="project" value="UniProtKB-KW"/>
</dbReference>
<dbReference type="CDD" id="cd07924">
    <property type="entry name" value="PCA_45_Doxase_A"/>
    <property type="match status" value="1"/>
</dbReference>
<dbReference type="Gene3D" id="1.10.700.10">
    <property type="entry name" value="Dioxygenase LigAB, LigA subunit"/>
    <property type="match status" value="1"/>
</dbReference>
<dbReference type="InterPro" id="IPR036622">
    <property type="entry name" value="LigA_sf"/>
</dbReference>
<dbReference type="InterPro" id="IPR014159">
    <property type="entry name" value="PCA_LigA"/>
</dbReference>
<dbReference type="InterPro" id="IPR011986">
    <property type="entry name" value="Xdiol_dOase_LigA"/>
</dbReference>
<dbReference type="NCBIfam" id="TIGR02792">
    <property type="entry name" value="PCA_ligA"/>
    <property type="match status" value="1"/>
</dbReference>
<dbReference type="NCBIfam" id="NF009917">
    <property type="entry name" value="PRK13377.1"/>
    <property type="match status" value="1"/>
</dbReference>
<dbReference type="Pfam" id="PF07746">
    <property type="entry name" value="LigA"/>
    <property type="match status" value="1"/>
</dbReference>
<dbReference type="SUPFAM" id="SSF48076">
    <property type="entry name" value="LigA subunit of an aromatic-ring-opening dioxygenase LigAB"/>
    <property type="match status" value="1"/>
</dbReference>
<sequence>MTEKKERIDVHAYLAEFDDIPGTRVFTAQRARKGYNLNQFAMSLMKAENRERFKADESAYLDEWNLTPAAKAAVLARDYNAMIDEGGNVYFLSKLFSTDGKSFQFAAGSMTGMTQEEYAQMMIDGGRSPAGVRSIKGGY</sequence>
<feature type="chain" id="PRO_0000085100" description="Protocatechuate 4,5-dioxygenase alpha chain">
    <location>
        <begin position="1"/>
        <end position="139"/>
    </location>
</feature>
<feature type="helix" evidence="1">
    <location>
        <begin position="10"/>
        <end position="15"/>
    </location>
</feature>
<feature type="helix" evidence="1">
    <location>
        <begin position="16"/>
        <end position="19"/>
    </location>
</feature>
<feature type="helix" evidence="1">
    <location>
        <begin position="28"/>
        <end position="33"/>
    </location>
</feature>
<feature type="helix" evidence="1">
    <location>
        <begin position="35"/>
        <end position="43"/>
    </location>
</feature>
<feature type="helix" evidence="1">
    <location>
        <begin position="47"/>
        <end position="55"/>
    </location>
</feature>
<feature type="helix" evidence="1">
    <location>
        <begin position="57"/>
        <end position="62"/>
    </location>
</feature>
<feature type="turn" evidence="1">
    <location>
        <begin position="63"/>
        <end position="65"/>
    </location>
</feature>
<feature type="helix" evidence="1">
    <location>
        <begin position="68"/>
        <end position="76"/>
    </location>
</feature>
<feature type="helix" evidence="1">
    <location>
        <begin position="79"/>
        <end position="84"/>
    </location>
</feature>
<feature type="helix" evidence="1">
    <location>
        <begin position="89"/>
        <end position="98"/>
    </location>
</feature>
<feature type="helix" evidence="1">
    <location>
        <begin position="103"/>
        <end position="109"/>
    </location>
</feature>
<feature type="turn" evidence="1">
    <location>
        <begin position="110"/>
        <end position="112"/>
    </location>
</feature>
<feature type="helix" evidence="1">
    <location>
        <begin position="115"/>
        <end position="123"/>
    </location>
</feature>
<feature type="turn" evidence="1">
    <location>
        <begin position="135"/>
        <end position="137"/>
    </location>
</feature>
<proteinExistence type="evidence at protein level"/>
<evidence type="ECO:0007829" key="1">
    <source>
        <dbReference type="PDB" id="1B4U"/>
    </source>
</evidence>